<name>KAD_NITV9</name>
<comment type="function">
    <text evidence="1">Catalyzes the reversible transfer of the terminal phosphate group between ATP and AMP. Plays an important role in cellular energy homeostasis and in adenine nucleotide metabolism.</text>
</comment>
<comment type="catalytic activity">
    <reaction evidence="1">
        <text>AMP + ATP = 2 ADP</text>
        <dbReference type="Rhea" id="RHEA:12973"/>
        <dbReference type="ChEBI" id="CHEBI:30616"/>
        <dbReference type="ChEBI" id="CHEBI:456215"/>
        <dbReference type="ChEBI" id="CHEBI:456216"/>
        <dbReference type="EC" id="2.7.4.3"/>
    </reaction>
</comment>
<comment type="pathway">
    <text evidence="1">Purine metabolism; AMP biosynthesis via salvage pathway; AMP from ADP: step 1/1.</text>
</comment>
<comment type="subunit">
    <text evidence="1">Monomer.</text>
</comment>
<comment type="subcellular location">
    <subcellularLocation>
        <location evidence="1">Cytoplasm</location>
    </subcellularLocation>
</comment>
<comment type="domain">
    <text evidence="1">Consists of three domains, a large central CORE domain and two small peripheral domains, NMPbind and LID, which undergo movements during catalysis. The LID domain closes over the site of phosphoryl transfer upon ATP binding. Assembling and dissambling the active center during each catalytic cycle provides an effective means to prevent ATP hydrolysis.</text>
</comment>
<comment type="similarity">
    <text evidence="1">Belongs to the adenylate kinase family.</text>
</comment>
<evidence type="ECO:0000255" key="1">
    <source>
        <dbReference type="HAMAP-Rule" id="MF_00235"/>
    </source>
</evidence>
<gene>
    <name evidence="1" type="primary">adk</name>
    <name type="ordered locus">DvMF_0293</name>
</gene>
<protein>
    <recommendedName>
        <fullName evidence="1">Adenylate kinase</fullName>
        <shortName evidence="1">AK</shortName>
        <ecNumber evidence="1">2.7.4.3</ecNumber>
    </recommendedName>
    <alternativeName>
        <fullName evidence="1">ATP-AMP transphosphorylase</fullName>
    </alternativeName>
    <alternativeName>
        <fullName evidence="1">ATP:AMP phosphotransferase</fullName>
    </alternativeName>
    <alternativeName>
        <fullName evidence="1">Adenylate monophosphate kinase</fullName>
    </alternativeName>
</protein>
<accession>B8DPG3</accession>
<keyword id="KW-0067">ATP-binding</keyword>
<keyword id="KW-0963">Cytoplasm</keyword>
<keyword id="KW-0418">Kinase</keyword>
<keyword id="KW-0545">Nucleotide biosynthesis</keyword>
<keyword id="KW-0547">Nucleotide-binding</keyword>
<keyword id="KW-0808">Transferase</keyword>
<reference key="1">
    <citation type="submission" date="2008-10" db="EMBL/GenBank/DDBJ databases">
        <title>Complete sequence of Desulfovibrio vulgaris str. 'Miyazaki F'.</title>
        <authorList>
            <person name="Lucas S."/>
            <person name="Copeland A."/>
            <person name="Lapidus A."/>
            <person name="Glavina del Rio T."/>
            <person name="Dalin E."/>
            <person name="Tice H."/>
            <person name="Bruce D."/>
            <person name="Goodwin L."/>
            <person name="Pitluck S."/>
            <person name="Sims D."/>
            <person name="Brettin T."/>
            <person name="Detter J.C."/>
            <person name="Han C."/>
            <person name="Larimer F."/>
            <person name="Land M."/>
            <person name="Hauser L."/>
            <person name="Kyrpides N."/>
            <person name="Mikhailova N."/>
            <person name="Hazen T.C."/>
            <person name="Richardson P."/>
        </authorList>
    </citation>
    <scope>NUCLEOTIDE SEQUENCE [LARGE SCALE GENOMIC DNA]</scope>
    <source>
        <strain>DSM 19637 / Miyazaki F</strain>
    </source>
</reference>
<organism>
    <name type="scientific">Nitratidesulfovibrio vulgaris (strain DSM 19637 / Miyazaki F)</name>
    <name type="common">Desulfovibrio vulgaris</name>
    <dbReference type="NCBI Taxonomy" id="883"/>
    <lineage>
        <taxon>Bacteria</taxon>
        <taxon>Pseudomonadati</taxon>
        <taxon>Thermodesulfobacteriota</taxon>
        <taxon>Desulfovibrionia</taxon>
        <taxon>Desulfovibrionales</taxon>
        <taxon>Desulfovibrionaceae</taxon>
        <taxon>Nitratidesulfovibrio</taxon>
    </lineage>
</organism>
<dbReference type="EC" id="2.7.4.3" evidence="1"/>
<dbReference type="EMBL" id="CP001197">
    <property type="protein sequence ID" value="ACL07250.1"/>
    <property type="molecule type" value="Genomic_DNA"/>
</dbReference>
<dbReference type="SMR" id="B8DPG3"/>
<dbReference type="STRING" id="883.DvMF_0293"/>
<dbReference type="KEGG" id="dvm:DvMF_0293"/>
<dbReference type="eggNOG" id="COG0563">
    <property type="taxonomic scope" value="Bacteria"/>
</dbReference>
<dbReference type="HOGENOM" id="CLU_032354_1_2_7"/>
<dbReference type="OrthoDB" id="9805030at2"/>
<dbReference type="UniPathway" id="UPA00588">
    <property type="reaction ID" value="UER00649"/>
</dbReference>
<dbReference type="GO" id="GO:0005737">
    <property type="term" value="C:cytoplasm"/>
    <property type="evidence" value="ECO:0007669"/>
    <property type="project" value="UniProtKB-SubCell"/>
</dbReference>
<dbReference type="GO" id="GO:0004017">
    <property type="term" value="F:adenylate kinase activity"/>
    <property type="evidence" value="ECO:0007669"/>
    <property type="project" value="UniProtKB-UniRule"/>
</dbReference>
<dbReference type="GO" id="GO:0005524">
    <property type="term" value="F:ATP binding"/>
    <property type="evidence" value="ECO:0007669"/>
    <property type="project" value="UniProtKB-UniRule"/>
</dbReference>
<dbReference type="GO" id="GO:0044209">
    <property type="term" value="P:AMP salvage"/>
    <property type="evidence" value="ECO:0007669"/>
    <property type="project" value="UniProtKB-UniRule"/>
</dbReference>
<dbReference type="CDD" id="cd01428">
    <property type="entry name" value="ADK"/>
    <property type="match status" value="1"/>
</dbReference>
<dbReference type="Gene3D" id="3.40.50.300">
    <property type="entry name" value="P-loop containing nucleotide triphosphate hydrolases"/>
    <property type="match status" value="1"/>
</dbReference>
<dbReference type="HAMAP" id="MF_00235">
    <property type="entry name" value="Adenylate_kinase_Adk"/>
    <property type="match status" value="1"/>
</dbReference>
<dbReference type="InterPro" id="IPR000850">
    <property type="entry name" value="Adenylat/UMP-CMP_kin"/>
</dbReference>
<dbReference type="InterPro" id="IPR033690">
    <property type="entry name" value="Adenylat_kinase_CS"/>
</dbReference>
<dbReference type="InterPro" id="IPR027417">
    <property type="entry name" value="P-loop_NTPase"/>
</dbReference>
<dbReference type="NCBIfam" id="NF011102">
    <property type="entry name" value="PRK14529.1"/>
    <property type="match status" value="1"/>
</dbReference>
<dbReference type="PANTHER" id="PTHR23359">
    <property type="entry name" value="NUCLEOTIDE KINASE"/>
    <property type="match status" value="1"/>
</dbReference>
<dbReference type="Pfam" id="PF00406">
    <property type="entry name" value="ADK"/>
    <property type="match status" value="1"/>
</dbReference>
<dbReference type="PRINTS" id="PR00094">
    <property type="entry name" value="ADENYLTKNASE"/>
</dbReference>
<dbReference type="SUPFAM" id="SSF52540">
    <property type="entry name" value="P-loop containing nucleoside triphosphate hydrolases"/>
    <property type="match status" value="1"/>
</dbReference>
<dbReference type="PROSITE" id="PS00113">
    <property type="entry name" value="ADENYLATE_KINASE"/>
    <property type="match status" value="1"/>
</dbReference>
<proteinExistence type="inferred from homology"/>
<sequence>MNILIFGPNGSGKGTQGALVKKKYDLAHIESGAIFRQHIGGGTELGKKAKEYIDRGDLVPDDITIPMVLETLKGAGPNGWLLDGFPRNMVQAQKLWDALQAEGLKLDYVIEILLPREVAKNRIMGRRLCKNDNNHPNNIFIDAIKPDGDVCRVCGGSLSARADDQDEGAIGKRHDIYYNTEDGTLAAAYFYKDLAAKGVTKYIELDGEGSIDSIKDTLLKQLA</sequence>
<feature type="chain" id="PRO_1000191139" description="Adenylate kinase">
    <location>
        <begin position="1"/>
        <end position="223"/>
    </location>
</feature>
<feature type="region of interest" description="NMP" evidence="1">
    <location>
        <begin position="30"/>
        <end position="59"/>
    </location>
</feature>
<feature type="region of interest" description="LID" evidence="1">
    <location>
        <begin position="125"/>
        <end position="164"/>
    </location>
</feature>
<feature type="binding site" evidence="1">
    <location>
        <begin position="10"/>
        <end position="15"/>
    </location>
    <ligand>
        <name>ATP</name>
        <dbReference type="ChEBI" id="CHEBI:30616"/>
    </ligand>
</feature>
<feature type="binding site" evidence="1">
    <location>
        <position position="31"/>
    </location>
    <ligand>
        <name>AMP</name>
        <dbReference type="ChEBI" id="CHEBI:456215"/>
    </ligand>
</feature>
<feature type="binding site" evidence="1">
    <location>
        <position position="36"/>
    </location>
    <ligand>
        <name>AMP</name>
        <dbReference type="ChEBI" id="CHEBI:456215"/>
    </ligand>
</feature>
<feature type="binding site" evidence="1">
    <location>
        <begin position="57"/>
        <end position="59"/>
    </location>
    <ligand>
        <name>AMP</name>
        <dbReference type="ChEBI" id="CHEBI:456215"/>
    </ligand>
</feature>
<feature type="binding site" evidence="1">
    <location>
        <begin position="84"/>
        <end position="87"/>
    </location>
    <ligand>
        <name>AMP</name>
        <dbReference type="ChEBI" id="CHEBI:456215"/>
    </ligand>
</feature>
<feature type="binding site" evidence="1">
    <location>
        <position position="91"/>
    </location>
    <ligand>
        <name>AMP</name>
        <dbReference type="ChEBI" id="CHEBI:456215"/>
    </ligand>
</feature>
<feature type="binding site" evidence="1">
    <location>
        <position position="126"/>
    </location>
    <ligand>
        <name>ATP</name>
        <dbReference type="ChEBI" id="CHEBI:30616"/>
    </ligand>
</feature>
<feature type="binding site" evidence="1">
    <location>
        <position position="161"/>
    </location>
    <ligand>
        <name>AMP</name>
        <dbReference type="ChEBI" id="CHEBI:456215"/>
    </ligand>
</feature>
<feature type="binding site" evidence="1">
    <location>
        <position position="173"/>
    </location>
    <ligand>
        <name>AMP</name>
        <dbReference type="ChEBI" id="CHEBI:456215"/>
    </ligand>
</feature>
<feature type="binding site" evidence="1">
    <location>
        <position position="209"/>
    </location>
    <ligand>
        <name>ATP</name>
        <dbReference type="ChEBI" id="CHEBI:30616"/>
    </ligand>
</feature>